<feature type="chain" id="PRO_1000214636" description="Large ribosomal subunit protein uL5">
    <location>
        <begin position="1"/>
        <end position="179"/>
    </location>
</feature>
<comment type="function">
    <text evidence="1">This is one of the proteins that bind and probably mediate the attachment of the 5S RNA into the large ribosomal subunit, where it forms part of the central protuberance. In the 70S ribosome it contacts protein S13 of the 30S subunit (bridge B1b), connecting the 2 subunits; this bridge is implicated in subunit movement. Contacts the P site tRNA; the 5S rRNA and some of its associated proteins might help stabilize positioning of ribosome-bound tRNAs.</text>
</comment>
<comment type="subunit">
    <text evidence="1">Part of the 50S ribosomal subunit; part of the 5S rRNA/L5/L18/L25 subcomplex. Contacts the 5S rRNA and the P site tRNA. Forms a bridge to the 30S subunit in the 70S ribosome.</text>
</comment>
<comment type="similarity">
    <text evidence="1">Belongs to the universal ribosomal protein uL5 family.</text>
</comment>
<keyword id="KW-0687">Ribonucleoprotein</keyword>
<keyword id="KW-0689">Ribosomal protein</keyword>
<keyword id="KW-0694">RNA-binding</keyword>
<keyword id="KW-0699">rRNA-binding</keyword>
<keyword id="KW-0820">tRNA-binding</keyword>
<evidence type="ECO:0000255" key="1">
    <source>
        <dbReference type="HAMAP-Rule" id="MF_01333"/>
    </source>
</evidence>
<evidence type="ECO:0000305" key="2"/>
<name>RL5_LISMC</name>
<protein>
    <recommendedName>
        <fullName evidence="1">Large ribosomal subunit protein uL5</fullName>
    </recommendedName>
    <alternativeName>
        <fullName evidence="2">50S ribosomal protein L5</fullName>
    </alternativeName>
</protein>
<accession>C1KZG8</accession>
<gene>
    <name evidence="1" type="primary">rplE</name>
    <name type="ordered locus">Lm4b_02587</name>
</gene>
<proteinExistence type="inferred from homology"/>
<reference key="1">
    <citation type="journal article" date="2012" name="BMC Genomics">
        <title>Comparative genomics and transcriptomics of lineages I, II, and III strains of Listeria monocytogenes.</title>
        <authorList>
            <person name="Hain T."/>
            <person name="Ghai R."/>
            <person name="Billion A."/>
            <person name="Kuenne C.T."/>
            <person name="Steinweg C."/>
            <person name="Izar B."/>
            <person name="Mohamed W."/>
            <person name="Mraheil M."/>
            <person name="Domann E."/>
            <person name="Schaffrath S."/>
            <person name="Karst U."/>
            <person name="Goesmann A."/>
            <person name="Oehm S."/>
            <person name="Puhler A."/>
            <person name="Merkl R."/>
            <person name="Vorwerk S."/>
            <person name="Glaser P."/>
            <person name="Garrido P."/>
            <person name="Rusniok C."/>
            <person name="Buchrieser C."/>
            <person name="Goebel W."/>
            <person name="Chakraborty T."/>
        </authorList>
    </citation>
    <scope>NUCLEOTIDE SEQUENCE [LARGE SCALE GENOMIC DNA]</scope>
    <source>
        <strain>CLIP80459</strain>
    </source>
</reference>
<organism>
    <name type="scientific">Listeria monocytogenes serotype 4b (strain CLIP80459)</name>
    <dbReference type="NCBI Taxonomy" id="568819"/>
    <lineage>
        <taxon>Bacteria</taxon>
        <taxon>Bacillati</taxon>
        <taxon>Bacillota</taxon>
        <taxon>Bacilli</taxon>
        <taxon>Bacillales</taxon>
        <taxon>Listeriaceae</taxon>
        <taxon>Listeria</taxon>
    </lineage>
</organism>
<sequence>MNRLKDQYLKEIVPALMSKFNYDSVMEVPKIDKIVINTGVGDATANAKVLDSAVEELALITGQKPVITKAKNSIAGFRLREGMPIGAKVTLRGERMYDFLDKLVTVSLPRVRDFRGVSKKAFDGRGNYTLGVREQLIFPEIDYDQVSKVRGMDVVIVTTAKSDEESHELLTQLGMPFQK</sequence>
<dbReference type="EMBL" id="FM242711">
    <property type="protein sequence ID" value="CAS06341.1"/>
    <property type="molecule type" value="Genomic_DNA"/>
</dbReference>
<dbReference type="RefSeq" id="WP_003720938.1">
    <property type="nucleotide sequence ID" value="NC_012488.1"/>
</dbReference>
<dbReference type="SMR" id="C1KZG8"/>
<dbReference type="GeneID" id="93240501"/>
<dbReference type="KEGG" id="lmc:Lm4b_02587"/>
<dbReference type="HOGENOM" id="CLU_061015_2_1_9"/>
<dbReference type="GO" id="GO:1990904">
    <property type="term" value="C:ribonucleoprotein complex"/>
    <property type="evidence" value="ECO:0007669"/>
    <property type="project" value="UniProtKB-KW"/>
</dbReference>
<dbReference type="GO" id="GO:0005840">
    <property type="term" value="C:ribosome"/>
    <property type="evidence" value="ECO:0007669"/>
    <property type="project" value="UniProtKB-KW"/>
</dbReference>
<dbReference type="GO" id="GO:0019843">
    <property type="term" value="F:rRNA binding"/>
    <property type="evidence" value="ECO:0007669"/>
    <property type="project" value="UniProtKB-UniRule"/>
</dbReference>
<dbReference type="GO" id="GO:0003735">
    <property type="term" value="F:structural constituent of ribosome"/>
    <property type="evidence" value="ECO:0007669"/>
    <property type="project" value="InterPro"/>
</dbReference>
<dbReference type="GO" id="GO:0000049">
    <property type="term" value="F:tRNA binding"/>
    <property type="evidence" value="ECO:0007669"/>
    <property type="project" value="UniProtKB-UniRule"/>
</dbReference>
<dbReference type="GO" id="GO:0006412">
    <property type="term" value="P:translation"/>
    <property type="evidence" value="ECO:0007669"/>
    <property type="project" value="UniProtKB-UniRule"/>
</dbReference>
<dbReference type="FunFam" id="3.30.1440.10:FF:000001">
    <property type="entry name" value="50S ribosomal protein L5"/>
    <property type="match status" value="1"/>
</dbReference>
<dbReference type="Gene3D" id="3.30.1440.10">
    <property type="match status" value="1"/>
</dbReference>
<dbReference type="HAMAP" id="MF_01333_B">
    <property type="entry name" value="Ribosomal_uL5_B"/>
    <property type="match status" value="1"/>
</dbReference>
<dbReference type="InterPro" id="IPR002132">
    <property type="entry name" value="Ribosomal_uL5"/>
</dbReference>
<dbReference type="InterPro" id="IPR020930">
    <property type="entry name" value="Ribosomal_uL5_bac-type"/>
</dbReference>
<dbReference type="InterPro" id="IPR031309">
    <property type="entry name" value="Ribosomal_uL5_C"/>
</dbReference>
<dbReference type="InterPro" id="IPR020929">
    <property type="entry name" value="Ribosomal_uL5_CS"/>
</dbReference>
<dbReference type="InterPro" id="IPR022803">
    <property type="entry name" value="Ribosomal_uL5_dom_sf"/>
</dbReference>
<dbReference type="InterPro" id="IPR031310">
    <property type="entry name" value="Ribosomal_uL5_N"/>
</dbReference>
<dbReference type="NCBIfam" id="NF000585">
    <property type="entry name" value="PRK00010.1"/>
    <property type="match status" value="1"/>
</dbReference>
<dbReference type="PANTHER" id="PTHR11994">
    <property type="entry name" value="60S RIBOSOMAL PROTEIN L11-RELATED"/>
    <property type="match status" value="1"/>
</dbReference>
<dbReference type="Pfam" id="PF00281">
    <property type="entry name" value="Ribosomal_L5"/>
    <property type="match status" value="1"/>
</dbReference>
<dbReference type="Pfam" id="PF00673">
    <property type="entry name" value="Ribosomal_L5_C"/>
    <property type="match status" value="1"/>
</dbReference>
<dbReference type="PIRSF" id="PIRSF002161">
    <property type="entry name" value="Ribosomal_L5"/>
    <property type="match status" value="1"/>
</dbReference>
<dbReference type="SUPFAM" id="SSF55282">
    <property type="entry name" value="RL5-like"/>
    <property type="match status" value="1"/>
</dbReference>
<dbReference type="PROSITE" id="PS00358">
    <property type="entry name" value="RIBOSOMAL_L5"/>
    <property type="match status" value="1"/>
</dbReference>